<keyword id="KW-0028">Amino-acid biosynthesis</keyword>
<keyword id="KW-0963">Cytoplasm</keyword>
<keyword id="KW-0368">Histidine biosynthesis</keyword>
<keyword id="KW-0413">Isomerase</keyword>
<reference key="1">
    <citation type="journal article" date="2008" name="J. Bacteriol.">
        <title>Comparative genome sequence analysis of multidrug-resistant Acinetobacter baumannii.</title>
        <authorList>
            <person name="Adams M.D."/>
            <person name="Goglin K."/>
            <person name="Molyneaux N."/>
            <person name="Hujer K.M."/>
            <person name="Lavender H."/>
            <person name="Jamison J.J."/>
            <person name="MacDonald I.J."/>
            <person name="Martin K.M."/>
            <person name="Russo T."/>
            <person name="Campagnari A.A."/>
            <person name="Hujer A.M."/>
            <person name="Bonomo R.A."/>
            <person name="Gill S.R."/>
        </authorList>
    </citation>
    <scope>NUCLEOTIDE SEQUENCE [LARGE SCALE GENOMIC DNA]</scope>
    <source>
        <strain>AB307-0294</strain>
    </source>
</reference>
<gene>
    <name evidence="1" type="primary">hisA</name>
    <name type="ordered locus">ABBFA_000275</name>
</gene>
<proteinExistence type="inferred from homology"/>
<evidence type="ECO:0000255" key="1">
    <source>
        <dbReference type="HAMAP-Rule" id="MF_01014"/>
    </source>
</evidence>
<comment type="catalytic activity">
    <reaction evidence="1">
        <text>1-(5-phospho-beta-D-ribosyl)-5-[(5-phospho-beta-D-ribosylamino)methylideneamino]imidazole-4-carboxamide = 5-[(5-phospho-1-deoxy-D-ribulos-1-ylimino)methylamino]-1-(5-phospho-beta-D-ribosyl)imidazole-4-carboxamide</text>
        <dbReference type="Rhea" id="RHEA:15469"/>
        <dbReference type="ChEBI" id="CHEBI:58435"/>
        <dbReference type="ChEBI" id="CHEBI:58525"/>
        <dbReference type="EC" id="5.3.1.16"/>
    </reaction>
</comment>
<comment type="pathway">
    <text evidence="1">Amino-acid biosynthesis; L-histidine biosynthesis; L-histidine from 5-phospho-alpha-D-ribose 1-diphosphate: step 4/9.</text>
</comment>
<comment type="subcellular location">
    <subcellularLocation>
        <location evidence="1">Cytoplasm</location>
    </subcellularLocation>
</comment>
<comment type="similarity">
    <text evidence="1">Belongs to the HisA/HisF family.</text>
</comment>
<accession>B7GVK1</accession>
<organism>
    <name type="scientific">Acinetobacter baumannii (strain AB307-0294)</name>
    <dbReference type="NCBI Taxonomy" id="557600"/>
    <lineage>
        <taxon>Bacteria</taxon>
        <taxon>Pseudomonadati</taxon>
        <taxon>Pseudomonadota</taxon>
        <taxon>Gammaproteobacteria</taxon>
        <taxon>Moraxellales</taxon>
        <taxon>Moraxellaceae</taxon>
        <taxon>Acinetobacter</taxon>
        <taxon>Acinetobacter calcoaceticus/baumannii complex</taxon>
    </lineage>
</organism>
<dbReference type="EC" id="5.3.1.16" evidence="1"/>
<dbReference type="EMBL" id="CP001172">
    <property type="protein sequence ID" value="ACJ59086.1"/>
    <property type="molecule type" value="Genomic_DNA"/>
</dbReference>
<dbReference type="RefSeq" id="WP_000905538.1">
    <property type="nucleotide sequence ID" value="NZ_CP001172.1"/>
</dbReference>
<dbReference type="SMR" id="B7GVK1"/>
<dbReference type="GeneID" id="92895476"/>
<dbReference type="HOGENOM" id="CLU_048577_1_1_6"/>
<dbReference type="UniPathway" id="UPA00031">
    <property type="reaction ID" value="UER00009"/>
</dbReference>
<dbReference type="Proteomes" id="UP000006924">
    <property type="component" value="Chromosome"/>
</dbReference>
<dbReference type="GO" id="GO:0005737">
    <property type="term" value="C:cytoplasm"/>
    <property type="evidence" value="ECO:0007669"/>
    <property type="project" value="UniProtKB-SubCell"/>
</dbReference>
<dbReference type="GO" id="GO:0003949">
    <property type="term" value="F:1-(5-phosphoribosyl)-5-[(5-phosphoribosylamino)methylideneamino]imidazole-4-carboxamide isomerase activity"/>
    <property type="evidence" value="ECO:0007669"/>
    <property type="project" value="UniProtKB-UniRule"/>
</dbReference>
<dbReference type="GO" id="GO:0000105">
    <property type="term" value="P:L-histidine biosynthetic process"/>
    <property type="evidence" value="ECO:0007669"/>
    <property type="project" value="UniProtKB-UniRule"/>
</dbReference>
<dbReference type="GO" id="GO:0000162">
    <property type="term" value="P:L-tryptophan biosynthetic process"/>
    <property type="evidence" value="ECO:0007669"/>
    <property type="project" value="TreeGrafter"/>
</dbReference>
<dbReference type="CDD" id="cd04732">
    <property type="entry name" value="HisA"/>
    <property type="match status" value="1"/>
</dbReference>
<dbReference type="FunFam" id="3.20.20.70:FF:000009">
    <property type="entry name" value="1-(5-phosphoribosyl)-5-[(5-phosphoribosylamino)methylideneamino] imidazole-4-carboxamide isomerase"/>
    <property type="match status" value="1"/>
</dbReference>
<dbReference type="Gene3D" id="3.20.20.70">
    <property type="entry name" value="Aldolase class I"/>
    <property type="match status" value="1"/>
</dbReference>
<dbReference type="HAMAP" id="MF_01014">
    <property type="entry name" value="HisA"/>
    <property type="match status" value="1"/>
</dbReference>
<dbReference type="InterPro" id="IPR013785">
    <property type="entry name" value="Aldolase_TIM"/>
</dbReference>
<dbReference type="InterPro" id="IPR006062">
    <property type="entry name" value="His_biosynth"/>
</dbReference>
<dbReference type="InterPro" id="IPR006063">
    <property type="entry name" value="HisA_bact_arch"/>
</dbReference>
<dbReference type="InterPro" id="IPR044524">
    <property type="entry name" value="Isoase_HisA-like"/>
</dbReference>
<dbReference type="InterPro" id="IPR023016">
    <property type="entry name" value="Isoase_HisA-like_bact"/>
</dbReference>
<dbReference type="InterPro" id="IPR011060">
    <property type="entry name" value="RibuloseP-bd_barrel"/>
</dbReference>
<dbReference type="NCBIfam" id="TIGR00007">
    <property type="entry name" value="1-(5-phosphoribosyl)-5-[(5-phosphoribosylamino)methylideneamino]imidazole-4-carboxamide isomerase"/>
    <property type="match status" value="1"/>
</dbReference>
<dbReference type="PANTHER" id="PTHR43090">
    <property type="entry name" value="1-(5-PHOSPHORIBOSYL)-5-[(5-PHOSPHORIBOSYLAMINO)METHYLIDENEAMINO] IMIDAZOLE-4-CARBOXAMIDE ISOMERASE"/>
    <property type="match status" value="1"/>
</dbReference>
<dbReference type="PANTHER" id="PTHR43090:SF2">
    <property type="entry name" value="1-(5-PHOSPHORIBOSYL)-5-[(5-PHOSPHORIBOSYLAMINO)METHYLIDENEAMINO] IMIDAZOLE-4-CARBOXAMIDE ISOMERASE"/>
    <property type="match status" value="1"/>
</dbReference>
<dbReference type="Pfam" id="PF00977">
    <property type="entry name" value="His_biosynth"/>
    <property type="match status" value="1"/>
</dbReference>
<dbReference type="SUPFAM" id="SSF51366">
    <property type="entry name" value="Ribulose-phoshate binding barrel"/>
    <property type="match status" value="1"/>
</dbReference>
<sequence length="243" mass="26083">MLIIPAIDLKDGKCVRLKQGRMEDDTVFSDDPVATAQHWVNEGARRLHLVDLNGAFAGTPIHKPVVEAIAKAQPELPIQIGGGIRSLETIEHYLEAGVTFVIIGTKAVQEPEFVEEACKRFAGHIIVGIDAMNGMVATDGWANVTDVKATDLAKRFADAGVSSIVYTDIARDGMMQGVNVEQTVNLAQYSGLPVIASGGVTNLDDVRNLKGQPGILGAITGRAIYEGTLNLREAQLLLDENRL</sequence>
<name>HIS4_ACIB3</name>
<protein>
    <recommendedName>
        <fullName evidence="1">1-(5-phosphoribosyl)-5-[(5-phosphoribosylamino)methylideneamino] imidazole-4-carboxamide isomerase</fullName>
        <ecNumber evidence="1">5.3.1.16</ecNumber>
    </recommendedName>
    <alternativeName>
        <fullName evidence="1">Phosphoribosylformimino-5-aminoimidazole carboxamide ribotide isomerase</fullName>
    </alternativeName>
</protein>
<feature type="chain" id="PRO_1000135065" description="1-(5-phosphoribosyl)-5-[(5-phosphoribosylamino)methylideneamino] imidazole-4-carboxamide isomerase">
    <location>
        <begin position="1"/>
        <end position="243"/>
    </location>
</feature>
<feature type="active site" description="Proton acceptor" evidence="1">
    <location>
        <position position="8"/>
    </location>
</feature>
<feature type="active site" description="Proton donor" evidence="1">
    <location>
        <position position="130"/>
    </location>
</feature>